<sequence>MWVLGIAATFCGLFWLPGLALQIQCYQCEEFQLNNDCSSPEFIVNCTVNVQDMCQKEVMEQSAGIMYRKSCASSAACLIASAGYQSFCSPGKLNSVCISCCNTPLCNGPRPKKRGSSASAIRPGLLTTLLFFHLALCLAHC</sequence>
<keyword id="KW-1003">Cell membrane</keyword>
<keyword id="KW-1015">Disulfide bond</keyword>
<keyword id="KW-0325">Glycoprotein</keyword>
<keyword id="KW-0336">GPI-anchor</keyword>
<keyword id="KW-0449">Lipoprotein</keyword>
<keyword id="KW-0472">Membrane</keyword>
<keyword id="KW-1185">Reference proteome</keyword>
<keyword id="KW-0732">Signal</keyword>
<feature type="signal peptide" evidence="2">
    <location>
        <begin position="1"/>
        <end position="20"/>
    </location>
</feature>
<feature type="chain" id="PRO_0000226743" description="Ly6/PLAUR domain-containing protein 1">
    <location>
        <begin position="21"/>
        <end position="115"/>
    </location>
</feature>
<feature type="propeptide" id="PRO_0000226744" description="Removed in mature form" evidence="2">
    <location>
        <begin position="116"/>
        <end position="141"/>
    </location>
</feature>
<feature type="domain" description="UPAR/Ly6">
    <location>
        <begin position="25"/>
        <end position="107"/>
    </location>
</feature>
<feature type="lipid moiety-binding region" description="GPI-anchor amidated glycine" evidence="2">
    <location>
        <position position="115"/>
    </location>
</feature>
<feature type="glycosylation site" description="N-linked (GlcNAc...) asparagine" evidence="2">
    <location>
        <position position="45"/>
    </location>
</feature>
<feature type="disulfide bond" evidence="1">
    <location>
        <begin position="25"/>
        <end position="54"/>
    </location>
</feature>
<feature type="disulfide bond" evidence="1">
    <location>
        <begin position="28"/>
        <end position="37"/>
    </location>
</feature>
<feature type="disulfide bond" evidence="1">
    <location>
        <begin position="46"/>
        <end position="71"/>
    </location>
</feature>
<feature type="disulfide bond" evidence="1">
    <location>
        <begin position="77"/>
        <end position="100"/>
    </location>
</feature>
<feature type="disulfide bond" evidence="1">
    <location>
        <begin position="88"/>
        <end position="97"/>
    </location>
</feature>
<feature type="disulfide bond" evidence="1">
    <location>
        <begin position="101"/>
        <end position="106"/>
    </location>
</feature>
<feature type="sequence conflict" description="In Ref. 1; BAA95101." evidence="7" ref="1">
    <original>M</original>
    <variation>T</variation>
    <location>
        <position position="59"/>
    </location>
</feature>
<comment type="function">
    <text evidence="4 5 6">Believed to act as a modulator of nicotinic acetylcholine receptors (nAChRs) activity. In vitro increases receptor desensitization and decreases affinity for ACh of alpha-4:beta-2-containing nAChRs (PubMed:19246390). May play a role in the intracellular trafficking of alpha-4:beta-2 and alpha-7-containing nAChRs and may inhibit their expression at the cell surface (PubMed:25716842, PubMed:26276394). May be involved in the control of anxiety (PubMed:19246390).</text>
</comment>
<comment type="subunit">
    <text evidence="4 5 6">Interacts with CHRNA4 and nAChRs containing alpha-4:beta-2 (CHRNA4:CHRNB2) and alpha-7 (CHRNA7) subunits.</text>
</comment>
<comment type="interaction">
    <interactant intactId="EBI-14035010">
        <id>Q8BLC3</id>
    </interactant>
    <interactant intactId="EBI-10916203">
        <id>O70174</id>
        <label>Chrna4</label>
    </interactant>
    <organismsDiffer>false</organismsDiffer>
    <experiments>3</experiments>
</comment>
<comment type="subcellular location">
    <subcellularLocation>
        <location evidence="7">Cell membrane</location>
        <topology evidence="7">Lipid-anchor</topology>
        <topology evidence="7">GPI-anchor</topology>
    </subcellularLocation>
</comment>
<comment type="tissue specificity">
    <text evidence="3 4">Preferentially expressed in the nervous system. Expressed in embryonic and postnatal postmitotic central and peripheral neurons including subpopulations of motor neurons, sensory neurons, interneurons and neurons of the autonomous nervous system. Expressed around the growing nerves in the limb bud (PubMed:16236524). Expressed at high levels in specific brain regions such as the prefrontal cortex, amygdala, hippocampus, mediodorsal thalamus, dentate gyrus and specific brainstem nuclei (at protein level) (PubMed:19246390).</text>
</comment>
<comment type="disruption phenotype">
    <text evidence="4">Increased anxiety-like behaviors. Increased glutamatergic activity in response to nicotine in layer V neurons of the medial prefrontal cortex.</text>
</comment>
<protein>
    <recommendedName>
        <fullName>Ly6/PLAUR domain-containing protein 1</fullName>
    </recommendedName>
    <alternativeName>
        <fullName>Ly-6/neurotoxin-like protein 2</fullName>
        <shortName>Lynx2</shortName>
    </alternativeName>
</protein>
<accession>Q8BLC3</accession>
<accession>Q3V2X5</accession>
<accession>Q3V447</accession>
<accession>Q9JJ96</accession>
<dbReference type="EMBL" id="AB041649">
    <property type="protein sequence ID" value="BAA95101.1"/>
    <property type="molecule type" value="mRNA"/>
</dbReference>
<dbReference type="EMBL" id="AK012406">
    <property type="protein sequence ID" value="BAE43232.1"/>
    <property type="molecule type" value="mRNA"/>
</dbReference>
<dbReference type="EMBL" id="AK045592">
    <property type="protein sequence ID" value="BAC32428.1"/>
    <property type="molecule type" value="mRNA"/>
</dbReference>
<dbReference type="EMBL" id="AK082941">
    <property type="protein sequence ID" value="BAE43380.1"/>
    <property type="molecule type" value="mRNA"/>
</dbReference>
<dbReference type="EMBL" id="BC058599">
    <property type="protein sequence ID" value="AAH58599.1"/>
    <property type="molecule type" value="mRNA"/>
</dbReference>
<dbReference type="CCDS" id="CCDS15243.1"/>
<dbReference type="RefSeq" id="NP_001298018.1">
    <property type="nucleotide sequence ID" value="NM_001311089.1"/>
</dbReference>
<dbReference type="RefSeq" id="NP_001298019.1">
    <property type="nucleotide sequence ID" value="NM_001311090.1"/>
</dbReference>
<dbReference type="RefSeq" id="NP_659568.2">
    <property type="nucleotide sequence ID" value="NM_145100.4"/>
</dbReference>
<dbReference type="SMR" id="Q8BLC3"/>
<dbReference type="DIP" id="DIP-48729N"/>
<dbReference type="FunCoup" id="Q8BLC3">
    <property type="interactions" value="737"/>
</dbReference>
<dbReference type="IntAct" id="Q8BLC3">
    <property type="interactions" value="2"/>
</dbReference>
<dbReference type="STRING" id="10090.ENSMUSP00000125149"/>
<dbReference type="GlyCosmos" id="Q8BLC3">
    <property type="glycosylation" value="1 site, No reported glycans"/>
</dbReference>
<dbReference type="GlyGen" id="Q8BLC3">
    <property type="glycosylation" value="1 site"/>
</dbReference>
<dbReference type="PhosphoSitePlus" id="Q8BLC3"/>
<dbReference type="SwissPalm" id="Q8BLC3"/>
<dbReference type="PaxDb" id="10090-ENSMUSP00000125149"/>
<dbReference type="ProteomicsDB" id="295738"/>
<dbReference type="Antibodypedia" id="56153">
    <property type="antibodies" value="76 antibodies from 20 providers"/>
</dbReference>
<dbReference type="DNASU" id="72585"/>
<dbReference type="Ensembl" id="ENSMUST00000159417.2">
    <property type="protein sequence ID" value="ENSMUSP00000125149.2"/>
    <property type="gene ID" value="ENSMUSG00000026344.10"/>
</dbReference>
<dbReference type="GeneID" id="72585"/>
<dbReference type="KEGG" id="mmu:72585"/>
<dbReference type="UCSC" id="uc007cki.1">
    <property type="organism name" value="mouse"/>
</dbReference>
<dbReference type="AGR" id="MGI:1919835"/>
<dbReference type="CTD" id="116372"/>
<dbReference type="MGI" id="MGI:1919835">
    <property type="gene designation" value="Lypd1"/>
</dbReference>
<dbReference type="VEuPathDB" id="HostDB:ENSMUSG00000026344"/>
<dbReference type="eggNOG" id="ENOG502S22T">
    <property type="taxonomic scope" value="Eukaryota"/>
</dbReference>
<dbReference type="GeneTree" id="ENSGT00390000002215"/>
<dbReference type="HOGENOM" id="CLU_152037_0_0_1"/>
<dbReference type="InParanoid" id="Q8BLC3"/>
<dbReference type="OMA" id="TFCGLFW"/>
<dbReference type="OrthoDB" id="9924997at2759"/>
<dbReference type="TreeFam" id="TF332325"/>
<dbReference type="Reactome" id="R-MMU-163125">
    <property type="pathway name" value="Post-translational modification: synthesis of GPI-anchored proteins"/>
</dbReference>
<dbReference type="BioGRID-ORCS" id="72585">
    <property type="hits" value="4 hits in 79 CRISPR screens"/>
</dbReference>
<dbReference type="PRO" id="PR:Q8BLC3"/>
<dbReference type="Proteomes" id="UP000000589">
    <property type="component" value="Chromosome 1"/>
</dbReference>
<dbReference type="RNAct" id="Q8BLC3">
    <property type="molecule type" value="protein"/>
</dbReference>
<dbReference type="Bgee" id="ENSMUSG00000026344">
    <property type="expression patterns" value="Expressed in epibranchial ganglion and 183 other cell types or tissues"/>
</dbReference>
<dbReference type="ExpressionAtlas" id="Q8BLC3">
    <property type="expression patterns" value="baseline and differential"/>
</dbReference>
<dbReference type="GO" id="GO:0016020">
    <property type="term" value="C:membrane"/>
    <property type="evidence" value="ECO:0000314"/>
    <property type="project" value="MGI"/>
</dbReference>
<dbReference type="GO" id="GO:0005886">
    <property type="term" value="C:plasma membrane"/>
    <property type="evidence" value="ECO:0007669"/>
    <property type="project" value="UniProtKB-SubCell"/>
</dbReference>
<dbReference type="GO" id="GO:0098552">
    <property type="term" value="C:side of membrane"/>
    <property type="evidence" value="ECO:0007669"/>
    <property type="project" value="UniProtKB-KW"/>
</dbReference>
<dbReference type="GO" id="GO:0045202">
    <property type="term" value="C:synapse"/>
    <property type="evidence" value="ECO:0007669"/>
    <property type="project" value="GOC"/>
</dbReference>
<dbReference type="GO" id="GO:0033130">
    <property type="term" value="F:acetylcholine receptor binding"/>
    <property type="evidence" value="ECO:0000314"/>
    <property type="project" value="MGI"/>
</dbReference>
<dbReference type="GO" id="GO:0030550">
    <property type="term" value="F:acetylcholine receptor inhibitor activity"/>
    <property type="evidence" value="ECO:0000314"/>
    <property type="project" value="MGI"/>
</dbReference>
<dbReference type="GO" id="GO:0095500">
    <property type="term" value="P:acetylcholine receptor signaling pathway"/>
    <property type="evidence" value="ECO:0000314"/>
    <property type="project" value="MGI"/>
</dbReference>
<dbReference type="GO" id="GO:0001662">
    <property type="term" value="P:behavioral fear response"/>
    <property type="evidence" value="ECO:0000315"/>
    <property type="project" value="MGI"/>
</dbReference>
<dbReference type="GO" id="GO:1903077">
    <property type="term" value="P:negative regulation of protein localization to plasma membrane"/>
    <property type="evidence" value="ECO:0000314"/>
    <property type="project" value="MGI"/>
</dbReference>
<dbReference type="GO" id="GO:0072659">
    <property type="term" value="P:protein localization to plasma membrane"/>
    <property type="evidence" value="ECO:0000314"/>
    <property type="project" value="MGI"/>
</dbReference>
<dbReference type="GO" id="GO:0035094">
    <property type="term" value="P:response to nicotine"/>
    <property type="evidence" value="ECO:0000315"/>
    <property type="project" value="MGI"/>
</dbReference>
<dbReference type="GO" id="GO:0007271">
    <property type="term" value="P:synaptic transmission, cholinergic"/>
    <property type="evidence" value="ECO:0000314"/>
    <property type="project" value="MGI"/>
</dbReference>
<dbReference type="CDD" id="cd23559">
    <property type="entry name" value="TFP_LU_ECD_LYPD1"/>
    <property type="match status" value="1"/>
</dbReference>
<dbReference type="InterPro" id="IPR016054">
    <property type="entry name" value="LY6_UPA_recep-like"/>
</dbReference>
<dbReference type="InterPro" id="IPR045860">
    <property type="entry name" value="Snake_toxin-like_sf"/>
</dbReference>
<dbReference type="PANTHER" id="PTHR10036">
    <property type="entry name" value="CD59 GLYCOPROTEIN"/>
    <property type="match status" value="1"/>
</dbReference>
<dbReference type="PANTHER" id="PTHR10036:SF7">
    <property type="entry name" value="LY6_PLAUR DOMAIN-CONTAINING PROTEIN 1"/>
    <property type="match status" value="1"/>
</dbReference>
<dbReference type="Pfam" id="PF00021">
    <property type="entry name" value="UPAR_LY6"/>
    <property type="match status" value="1"/>
</dbReference>
<dbReference type="SUPFAM" id="SSF57302">
    <property type="entry name" value="Snake toxin-like"/>
    <property type="match status" value="1"/>
</dbReference>
<organism>
    <name type="scientific">Mus musculus</name>
    <name type="common">Mouse</name>
    <dbReference type="NCBI Taxonomy" id="10090"/>
    <lineage>
        <taxon>Eukaryota</taxon>
        <taxon>Metazoa</taxon>
        <taxon>Chordata</taxon>
        <taxon>Craniata</taxon>
        <taxon>Vertebrata</taxon>
        <taxon>Euteleostomi</taxon>
        <taxon>Mammalia</taxon>
        <taxon>Eutheria</taxon>
        <taxon>Euarchontoglires</taxon>
        <taxon>Glires</taxon>
        <taxon>Rodentia</taxon>
        <taxon>Myomorpha</taxon>
        <taxon>Muroidea</taxon>
        <taxon>Muridae</taxon>
        <taxon>Murinae</taxon>
        <taxon>Mus</taxon>
        <taxon>Mus</taxon>
    </lineage>
</organism>
<gene>
    <name type="primary">Lypd1</name>
    <name type="synonym">Lypdc1</name>
    <name type="ORF">MNCb-0671</name>
</gene>
<evidence type="ECO:0000250" key="1">
    <source>
        <dbReference type="UniProtKB" id="Q8N2G4"/>
    </source>
</evidence>
<evidence type="ECO:0000255" key="2"/>
<evidence type="ECO:0000269" key="3">
    <source>
    </source>
</evidence>
<evidence type="ECO:0000269" key="4">
    <source>
    </source>
</evidence>
<evidence type="ECO:0000269" key="5">
    <source>
    </source>
</evidence>
<evidence type="ECO:0000269" key="6">
    <source>
    </source>
</evidence>
<evidence type="ECO:0000305" key="7"/>
<reference key="1">
    <citation type="submission" date="2000-04" db="EMBL/GenBank/DDBJ databases">
        <title>Isolation of full-length cDNA clones from mouse brain cDNA library made by oligo-capping method.</title>
        <authorList>
            <person name="Osada N."/>
            <person name="Kusuda J."/>
            <person name="Tanuma R."/>
            <person name="Ito A."/>
            <person name="Hirata M."/>
            <person name="Sugano S."/>
            <person name="Hashimoto K."/>
        </authorList>
    </citation>
    <scope>NUCLEOTIDE SEQUENCE [LARGE SCALE MRNA]</scope>
    <source>
        <strain>C57BL/6J</strain>
        <tissue>Brain</tissue>
    </source>
</reference>
<reference key="2">
    <citation type="journal article" date="2005" name="Science">
        <title>The transcriptional landscape of the mammalian genome.</title>
        <authorList>
            <person name="Carninci P."/>
            <person name="Kasukawa T."/>
            <person name="Katayama S."/>
            <person name="Gough J."/>
            <person name="Frith M.C."/>
            <person name="Maeda N."/>
            <person name="Oyama R."/>
            <person name="Ravasi T."/>
            <person name="Lenhard B."/>
            <person name="Wells C."/>
            <person name="Kodzius R."/>
            <person name="Shimokawa K."/>
            <person name="Bajic V.B."/>
            <person name="Brenner S.E."/>
            <person name="Batalov S."/>
            <person name="Forrest A.R."/>
            <person name="Zavolan M."/>
            <person name="Davis M.J."/>
            <person name="Wilming L.G."/>
            <person name="Aidinis V."/>
            <person name="Allen J.E."/>
            <person name="Ambesi-Impiombato A."/>
            <person name="Apweiler R."/>
            <person name="Aturaliya R.N."/>
            <person name="Bailey T.L."/>
            <person name="Bansal M."/>
            <person name="Baxter L."/>
            <person name="Beisel K.W."/>
            <person name="Bersano T."/>
            <person name="Bono H."/>
            <person name="Chalk A.M."/>
            <person name="Chiu K.P."/>
            <person name="Choudhary V."/>
            <person name="Christoffels A."/>
            <person name="Clutterbuck D.R."/>
            <person name="Crowe M.L."/>
            <person name="Dalla E."/>
            <person name="Dalrymple B.P."/>
            <person name="de Bono B."/>
            <person name="Della Gatta G."/>
            <person name="di Bernardo D."/>
            <person name="Down T."/>
            <person name="Engstrom P."/>
            <person name="Fagiolini M."/>
            <person name="Faulkner G."/>
            <person name="Fletcher C.F."/>
            <person name="Fukushima T."/>
            <person name="Furuno M."/>
            <person name="Futaki S."/>
            <person name="Gariboldi M."/>
            <person name="Georgii-Hemming P."/>
            <person name="Gingeras T.R."/>
            <person name="Gojobori T."/>
            <person name="Green R.E."/>
            <person name="Gustincich S."/>
            <person name="Harbers M."/>
            <person name="Hayashi Y."/>
            <person name="Hensch T.K."/>
            <person name="Hirokawa N."/>
            <person name="Hill D."/>
            <person name="Huminiecki L."/>
            <person name="Iacono M."/>
            <person name="Ikeo K."/>
            <person name="Iwama A."/>
            <person name="Ishikawa T."/>
            <person name="Jakt M."/>
            <person name="Kanapin A."/>
            <person name="Katoh M."/>
            <person name="Kawasawa Y."/>
            <person name="Kelso J."/>
            <person name="Kitamura H."/>
            <person name="Kitano H."/>
            <person name="Kollias G."/>
            <person name="Krishnan S.P."/>
            <person name="Kruger A."/>
            <person name="Kummerfeld S.K."/>
            <person name="Kurochkin I.V."/>
            <person name="Lareau L.F."/>
            <person name="Lazarevic D."/>
            <person name="Lipovich L."/>
            <person name="Liu J."/>
            <person name="Liuni S."/>
            <person name="McWilliam S."/>
            <person name="Madan Babu M."/>
            <person name="Madera M."/>
            <person name="Marchionni L."/>
            <person name="Matsuda H."/>
            <person name="Matsuzawa S."/>
            <person name="Miki H."/>
            <person name="Mignone F."/>
            <person name="Miyake S."/>
            <person name="Morris K."/>
            <person name="Mottagui-Tabar S."/>
            <person name="Mulder N."/>
            <person name="Nakano N."/>
            <person name="Nakauchi H."/>
            <person name="Ng P."/>
            <person name="Nilsson R."/>
            <person name="Nishiguchi S."/>
            <person name="Nishikawa S."/>
            <person name="Nori F."/>
            <person name="Ohara O."/>
            <person name="Okazaki Y."/>
            <person name="Orlando V."/>
            <person name="Pang K.C."/>
            <person name="Pavan W.J."/>
            <person name="Pavesi G."/>
            <person name="Pesole G."/>
            <person name="Petrovsky N."/>
            <person name="Piazza S."/>
            <person name="Reed J."/>
            <person name="Reid J.F."/>
            <person name="Ring B.Z."/>
            <person name="Ringwald M."/>
            <person name="Rost B."/>
            <person name="Ruan Y."/>
            <person name="Salzberg S.L."/>
            <person name="Sandelin A."/>
            <person name="Schneider C."/>
            <person name="Schoenbach C."/>
            <person name="Sekiguchi K."/>
            <person name="Semple C.A."/>
            <person name="Seno S."/>
            <person name="Sessa L."/>
            <person name="Sheng Y."/>
            <person name="Shibata Y."/>
            <person name="Shimada H."/>
            <person name="Shimada K."/>
            <person name="Silva D."/>
            <person name="Sinclair B."/>
            <person name="Sperling S."/>
            <person name="Stupka E."/>
            <person name="Sugiura K."/>
            <person name="Sultana R."/>
            <person name="Takenaka Y."/>
            <person name="Taki K."/>
            <person name="Tammoja K."/>
            <person name="Tan S.L."/>
            <person name="Tang S."/>
            <person name="Taylor M.S."/>
            <person name="Tegner J."/>
            <person name="Teichmann S.A."/>
            <person name="Ueda H.R."/>
            <person name="van Nimwegen E."/>
            <person name="Verardo R."/>
            <person name="Wei C.L."/>
            <person name="Yagi K."/>
            <person name="Yamanishi H."/>
            <person name="Zabarovsky E."/>
            <person name="Zhu S."/>
            <person name="Zimmer A."/>
            <person name="Hide W."/>
            <person name="Bult C."/>
            <person name="Grimmond S.M."/>
            <person name="Teasdale R.D."/>
            <person name="Liu E.T."/>
            <person name="Brusic V."/>
            <person name="Quackenbush J."/>
            <person name="Wahlestedt C."/>
            <person name="Mattick J.S."/>
            <person name="Hume D.A."/>
            <person name="Kai C."/>
            <person name="Sasaki D."/>
            <person name="Tomaru Y."/>
            <person name="Fukuda S."/>
            <person name="Kanamori-Katayama M."/>
            <person name="Suzuki M."/>
            <person name="Aoki J."/>
            <person name="Arakawa T."/>
            <person name="Iida J."/>
            <person name="Imamura K."/>
            <person name="Itoh M."/>
            <person name="Kato T."/>
            <person name="Kawaji H."/>
            <person name="Kawagashira N."/>
            <person name="Kawashima T."/>
            <person name="Kojima M."/>
            <person name="Kondo S."/>
            <person name="Konno H."/>
            <person name="Nakano K."/>
            <person name="Ninomiya N."/>
            <person name="Nishio T."/>
            <person name="Okada M."/>
            <person name="Plessy C."/>
            <person name="Shibata K."/>
            <person name="Shiraki T."/>
            <person name="Suzuki S."/>
            <person name="Tagami M."/>
            <person name="Waki K."/>
            <person name="Watahiki A."/>
            <person name="Okamura-Oho Y."/>
            <person name="Suzuki H."/>
            <person name="Kawai J."/>
            <person name="Hayashizaki Y."/>
        </authorList>
    </citation>
    <scope>NUCLEOTIDE SEQUENCE [LARGE SCALE MRNA]</scope>
    <source>
        <strain>C57BL/6J</strain>
        <tissue>Corpora quadrigemina</tissue>
    </source>
</reference>
<reference key="3">
    <citation type="journal article" date="2004" name="Genome Res.">
        <title>The status, quality, and expansion of the NIH full-length cDNA project: the Mammalian Gene Collection (MGC).</title>
        <authorList>
            <consortium name="The MGC Project Team"/>
        </authorList>
    </citation>
    <scope>NUCLEOTIDE SEQUENCE [LARGE SCALE MRNA]</scope>
    <source>
        <tissue>Olfactory epithelium</tissue>
    </source>
</reference>
<reference key="4">
    <citation type="journal article" date="2006" name="Mol. Cell. Neurosci.">
        <title>Identification of lynx2, a novel member of the ly-6/neurotoxin superfamily, expressed in neuronal subpopulations during mouse development.</title>
        <authorList>
            <person name="Dessaud E."/>
            <person name="Salauen D."/>
            <person name="Gayet O."/>
            <person name="Chabbert M."/>
            <person name="deLapeyriere O."/>
        </authorList>
    </citation>
    <scope>TISSUE SPECIFICITY</scope>
</reference>
<reference key="5">
    <citation type="journal article" date="2009" name="Proc. Natl. Acad. Sci. U.S.A.">
        <title>A role for LYNX2 in anxiety-related behavior.</title>
        <authorList>
            <person name="Tekinay A.B."/>
            <person name="Nong Y."/>
            <person name="Miwa J.M."/>
            <person name="Lieberam I."/>
            <person name="Ibanez-Tallon I."/>
            <person name="Greengard P."/>
            <person name="Heintz N."/>
        </authorList>
    </citation>
    <scope>FUNCTION</scope>
    <scope>INTERACTION WITH CHRNA4; CHRNA7 AND CHRNB2</scope>
    <scope>TISSUE SPECIFICITY</scope>
    <scope>DISRUPTION PHENOTYPE</scope>
</reference>
<reference key="6">
    <citation type="journal article" date="2015" name="J. Biol. Chem.">
        <title>Mechanisms of inhibition and potentiation of alpha4beta2 nicotinic acetylcholine receptors by members of the Ly6 protein family.</title>
        <authorList>
            <person name="Wu M."/>
            <person name="Puddifoot C.A."/>
            <person name="Taylor P."/>
            <person name="Joiner W.J."/>
        </authorList>
    </citation>
    <scope>FUNCTION</scope>
    <scope>INTERACTION WITH CHRNA4</scope>
</reference>
<reference key="7">
    <citation type="journal article" date="2015" name="J. Neurosci.">
        <title>Ly6h regulates trafficking of alpha7 nicotinic acetylcholine receptors and nicotine-induced potentiation of glutamatergic signaling.</title>
        <authorList>
            <person name="Puddifoot C.A."/>
            <person name="Wu M."/>
            <person name="Sung R.J."/>
            <person name="Joiner W.J."/>
        </authorList>
    </citation>
    <scope>FUNCTION</scope>
    <scope>INTERACTION WITH CHRNA7</scope>
</reference>
<name>LYPD1_MOUSE</name>
<proteinExistence type="evidence at protein level"/>